<reference key="1">
    <citation type="journal article" date="1987" name="Gene">
        <title>A rice glutelin and a soybean glycinin have evolved from a common ancestral gene.</title>
        <authorList>
            <person name="Higuchi W."/>
            <person name="Fukazawa C."/>
        </authorList>
    </citation>
    <scope>NUCLEOTIDE SEQUENCE [MRNA]</scope>
</reference>
<reference key="2">
    <citation type="journal article" date="1987" name="Mol. Gen. Genet.">
        <title>A rice glutelin gene family - A major type of glutelin mRNAs can be divided into two classes.</title>
        <authorList>
            <person name="Takaiwa F."/>
            <person name="Kikuchi S."/>
            <person name="Oono K."/>
        </authorList>
    </citation>
    <scope>NUCLEOTIDE SEQUENCE [MRNA]</scope>
</reference>
<reference key="3">
    <citation type="journal article" date="2002" name="Nature">
        <title>The genome sequence and structure of rice chromosome 1.</title>
        <authorList>
            <person name="Sasaki T."/>
            <person name="Matsumoto T."/>
            <person name="Yamamoto K."/>
            <person name="Sakata K."/>
            <person name="Baba T."/>
            <person name="Katayose Y."/>
            <person name="Wu J."/>
            <person name="Niimura Y."/>
            <person name="Cheng Z."/>
            <person name="Nagamura Y."/>
            <person name="Antonio B.A."/>
            <person name="Kanamori H."/>
            <person name="Hosokawa S."/>
            <person name="Masukawa M."/>
            <person name="Arikawa K."/>
            <person name="Chiden Y."/>
            <person name="Hayashi M."/>
            <person name="Okamoto M."/>
            <person name="Ando T."/>
            <person name="Aoki H."/>
            <person name="Arita K."/>
            <person name="Hamada M."/>
            <person name="Harada C."/>
            <person name="Hijishita S."/>
            <person name="Honda M."/>
            <person name="Ichikawa Y."/>
            <person name="Idonuma A."/>
            <person name="Iijima M."/>
            <person name="Ikeda M."/>
            <person name="Ikeno M."/>
            <person name="Ito S."/>
            <person name="Ito T."/>
            <person name="Ito Y."/>
            <person name="Ito Y."/>
            <person name="Iwabuchi A."/>
            <person name="Kamiya K."/>
            <person name="Karasawa W."/>
            <person name="Katagiri S."/>
            <person name="Kikuta A."/>
            <person name="Kobayashi N."/>
            <person name="Kono I."/>
            <person name="Machita K."/>
            <person name="Maehara T."/>
            <person name="Mizuno H."/>
            <person name="Mizubayashi T."/>
            <person name="Mukai Y."/>
            <person name="Nagasaki H."/>
            <person name="Nakashima M."/>
            <person name="Nakama Y."/>
            <person name="Nakamichi Y."/>
            <person name="Nakamura M."/>
            <person name="Namiki N."/>
            <person name="Negishi M."/>
            <person name="Ohta I."/>
            <person name="Ono N."/>
            <person name="Saji S."/>
            <person name="Sakai K."/>
            <person name="Shibata M."/>
            <person name="Shimokawa T."/>
            <person name="Shomura A."/>
            <person name="Song J."/>
            <person name="Takazaki Y."/>
            <person name="Terasawa K."/>
            <person name="Tsuji K."/>
            <person name="Waki K."/>
            <person name="Yamagata H."/>
            <person name="Yamane H."/>
            <person name="Yoshiki S."/>
            <person name="Yoshihara R."/>
            <person name="Yukawa K."/>
            <person name="Zhong H."/>
            <person name="Iwama H."/>
            <person name="Endo T."/>
            <person name="Ito H."/>
            <person name="Hahn J.H."/>
            <person name="Kim H.-I."/>
            <person name="Eun M.-Y."/>
            <person name="Yano M."/>
            <person name="Jiang J."/>
            <person name="Gojobori T."/>
        </authorList>
    </citation>
    <scope>NUCLEOTIDE SEQUENCE [LARGE SCALE GENOMIC DNA]</scope>
    <source>
        <strain>cv. Nipponbare</strain>
    </source>
</reference>
<reference key="4">
    <citation type="journal article" date="2005" name="Nature">
        <title>The map-based sequence of the rice genome.</title>
        <authorList>
            <consortium name="International rice genome sequencing project (IRGSP)"/>
        </authorList>
    </citation>
    <scope>NUCLEOTIDE SEQUENCE [LARGE SCALE GENOMIC DNA]</scope>
    <source>
        <strain>cv. Nipponbare</strain>
    </source>
</reference>
<reference key="5">
    <citation type="journal article" date="2013" name="Rice">
        <title>Improvement of the Oryza sativa Nipponbare reference genome using next generation sequence and optical map data.</title>
        <authorList>
            <person name="Kawahara Y."/>
            <person name="de la Bastide M."/>
            <person name="Hamilton J.P."/>
            <person name="Kanamori H."/>
            <person name="McCombie W.R."/>
            <person name="Ouyang S."/>
            <person name="Schwartz D.C."/>
            <person name="Tanaka T."/>
            <person name="Wu J."/>
            <person name="Zhou S."/>
            <person name="Childs K.L."/>
            <person name="Davidson R.M."/>
            <person name="Lin H."/>
            <person name="Quesada-Ocampo L."/>
            <person name="Vaillancourt B."/>
            <person name="Sakai H."/>
            <person name="Lee S.S."/>
            <person name="Kim J."/>
            <person name="Numa H."/>
            <person name="Itoh T."/>
            <person name="Buell C.R."/>
            <person name="Matsumoto T."/>
        </authorList>
    </citation>
    <scope>GENOME REANNOTATION</scope>
    <source>
        <strain>cv. Nipponbare</strain>
    </source>
</reference>
<reference key="6">
    <citation type="journal article" date="2004" name="Nucleic Acids Res.">
        <title>Rice proteome database based on two-dimensional polyacrylamide gel electrophoresis: its status in 2003.</title>
        <authorList>
            <person name="Komatsu S."/>
            <person name="Kojima K."/>
            <person name="Suzuki K."/>
            <person name="Ozaki K."/>
            <person name="Higo K."/>
        </authorList>
    </citation>
    <scope>PROTEIN SEQUENCE OF 25-38 AND 141-156</scope>
    <source>
        <strain>cv. Nipponbare</strain>
        <tissue>Endosperm</tissue>
        <tissue>Panicle</tissue>
    </source>
</reference>
<proteinExistence type="evidence at protein level"/>
<comment type="function">
    <text>Seed storage protein.</text>
</comment>
<comment type="subunit">
    <text>Hexamer; each subunit is composed of an acidic and a basic chain derived from a single precursor and linked by a disulfide bond.</text>
</comment>
<comment type="similarity">
    <text evidence="4">Belongs to the 11S seed storage protein (globulins) family.</text>
</comment>
<sequence length="499" mass="56247">MASINRPIVFFTVCLFLLCNGSLAQQLLGQSTSQWQSSRRGSPRECRFDRLQAFEPIRSVRSQAGTTEFFDVSNEQFQCTGVSVVRRVIEPRGLLLPHYTNGASLVYIIQGRGITGPTFPGCPESYQQQFQQSGQAQLTESQSQSQKFKDEHQKIHRFRQGDVIALPAGVAHWCYNDGEVPVVAIYVTDLNNGANQLDPRQRDFLLAGNKRNPQAYRREVEERSQNIFSGFSTELLSEALGVSSQVARQLQCQNDQRGEIVRVEHGLSLLQPYASLQEQEQGQVQSRERYQEGQYQQSQYGSGCSNGLDETFCTLRVRQNIDNPNRADTYNPRAGRVTNLNTQNFPILSLVQMSAVKVNLYQNALLSPFWNINAHSVVYITQGRARVQVVNNNGKTVFNGELRRGQLLIIPQHYAVVKKAQREGCAYIAFKTNPNSMVSHIAGKSSIFRALPNDVLANAYRISREEAQRLKHNRGDEFGAFTPIQYKSYQDVYNAAESS</sequence>
<name>GLUA1_ORYSJ</name>
<keyword id="KW-0903">Direct protein sequencing</keyword>
<keyword id="KW-1015">Disulfide bond</keyword>
<keyword id="KW-1185">Reference proteome</keyword>
<keyword id="KW-0708">Seed storage protein</keyword>
<keyword id="KW-0732">Signal</keyword>
<keyword id="KW-0758">Storage protein</keyword>
<evidence type="ECO:0000250" key="1"/>
<evidence type="ECO:0000255" key="2"/>
<evidence type="ECO:0000269" key="3">
    <source>
    </source>
</evidence>
<evidence type="ECO:0000305" key="4"/>
<gene>
    <name type="primary">GLUA1</name>
    <name type="synonym">GLUA-1</name>
    <name type="ordered locus">Os01g0762500</name>
    <name type="ordered locus">LOC_Os01g55690</name>
    <name type="ORF">P0460E08.38</name>
    <name type="ORF">P0512C01.36</name>
</gene>
<organism>
    <name type="scientific">Oryza sativa subsp. japonica</name>
    <name type="common">Rice</name>
    <dbReference type="NCBI Taxonomy" id="39947"/>
    <lineage>
        <taxon>Eukaryota</taxon>
        <taxon>Viridiplantae</taxon>
        <taxon>Streptophyta</taxon>
        <taxon>Embryophyta</taxon>
        <taxon>Tracheophyta</taxon>
        <taxon>Spermatophyta</taxon>
        <taxon>Magnoliopsida</taxon>
        <taxon>Liliopsida</taxon>
        <taxon>Poales</taxon>
        <taxon>Poaceae</taxon>
        <taxon>BOP clade</taxon>
        <taxon>Oryzoideae</taxon>
        <taxon>Oryzeae</taxon>
        <taxon>Oryzinae</taxon>
        <taxon>Oryza</taxon>
        <taxon>Oryza sativa</taxon>
    </lineage>
</organism>
<accession>P07728</accession>
<accession>P07729</accession>
<accession>Q40685</accession>
<accession>Q93Y59</accession>
<protein>
    <recommendedName>
        <fullName>Glutelin type-A 1</fullName>
    </recommendedName>
    <alternativeName>
        <fullName>Glutelin type I</fullName>
    </alternativeName>
    <component>
        <recommendedName>
            <fullName>Glutelin type-A 1 acidic chain</fullName>
        </recommendedName>
    </component>
    <component>
        <recommendedName>
            <fullName>Glutelin type-A 1 basic chain</fullName>
        </recommendedName>
    </component>
</protein>
<feature type="signal peptide" evidence="3">
    <location>
        <begin position="1"/>
        <end position="24"/>
    </location>
</feature>
<feature type="chain" id="PRO_0000032044" description="Glutelin type-A 1 acidic chain">
    <location>
        <begin position="25"/>
        <end position="306"/>
    </location>
</feature>
<feature type="chain" id="PRO_0000032045" description="Glutelin type-A 1 basic chain">
    <location>
        <begin position="307"/>
        <end position="499"/>
    </location>
</feature>
<feature type="domain" description="Cupin type-1 1" evidence="2">
    <location>
        <begin position="51"/>
        <end position="248"/>
    </location>
</feature>
<feature type="domain" description="Cupin type-1 2" evidence="2">
    <location>
        <begin position="319"/>
        <end position="468"/>
    </location>
</feature>
<feature type="disulfide bond" evidence="1">
    <location>
        <begin position="46"/>
        <end position="79"/>
    </location>
</feature>
<feature type="disulfide bond" description="Interchain (between acidic and basic chains)" evidence="2">
    <location>
        <begin position="122"/>
        <end position="313"/>
    </location>
</feature>
<feature type="sequence variant" description="In isoform PREE 103.">
    <location>
        <begin position="497"/>
        <end position="499"/>
    </location>
</feature>
<feature type="sequence conflict" description="In Ref. 1; AAA33906." evidence="4" ref="1">
    <original>P</original>
    <variation>S</variation>
    <location>
        <position position="43"/>
    </location>
</feature>
<feature type="sequence conflict" description="In Ref. 1; AAA33906." evidence="4" ref="1">
    <original>A</original>
    <variation>V</variation>
    <location>
        <position position="64"/>
    </location>
</feature>
<feature type="sequence conflict" description="In Ref. 2; CAA29149/CAA29150." evidence="4" ref="2">
    <original>S</original>
    <variation>G</variation>
    <location>
        <position position="244"/>
    </location>
</feature>
<feature type="sequence conflict" description="In Ref. 1; AAA33906." evidence="4" ref="1">
    <original>II</original>
    <variation>VV</variation>
    <location>
        <begin position="409"/>
        <end position="410"/>
    </location>
</feature>
<feature type="sequence conflict" description="In Ref. 1; AAA33906." evidence="4" ref="1">
    <original>A</original>
    <variation>R</variation>
    <location>
        <position position="450"/>
    </location>
</feature>
<feature type="sequence conflict" description="In Ref. 1; AAA33906." evidence="4" ref="1">
    <original>N</original>
    <variation>T</variation>
    <location>
        <position position="453"/>
    </location>
</feature>
<dbReference type="EMBL" id="M17513">
    <property type="protein sequence ID" value="AAA33906.1"/>
    <property type="molecule type" value="mRNA"/>
</dbReference>
<dbReference type="EMBL" id="X05661">
    <property type="protein sequence ID" value="CAA29149.1"/>
    <property type="molecule type" value="mRNA"/>
</dbReference>
<dbReference type="EMBL" id="X05662">
    <property type="protein sequence ID" value="CAA29150.1"/>
    <property type="molecule type" value="mRNA"/>
</dbReference>
<dbReference type="EMBL" id="AP003256">
    <property type="protein sequence ID" value="BAB61225.1"/>
    <property type="molecule type" value="Genomic_DNA"/>
</dbReference>
<dbReference type="EMBL" id="AP003274">
    <property type="protein sequence ID" value="BAB92370.1"/>
    <property type="molecule type" value="Genomic_DNA"/>
</dbReference>
<dbReference type="EMBL" id="AP014957">
    <property type="protein sequence ID" value="BAS74468.1"/>
    <property type="molecule type" value="Genomic_DNA"/>
</dbReference>
<dbReference type="PIR" id="A27033">
    <property type="entry name" value="A27033"/>
</dbReference>
<dbReference type="PIR" id="B34332">
    <property type="entry name" value="B34332"/>
</dbReference>
<dbReference type="PIR" id="S06350">
    <property type="entry name" value="S06350"/>
</dbReference>
<dbReference type="RefSeq" id="XP_015615123.1">
    <property type="nucleotide sequence ID" value="XM_015759637.1"/>
</dbReference>
<dbReference type="SMR" id="P07728"/>
<dbReference type="FunCoup" id="P07728">
    <property type="interactions" value="1784"/>
</dbReference>
<dbReference type="IntAct" id="P07728">
    <property type="interactions" value="4"/>
</dbReference>
<dbReference type="STRING" id="39947.P07728"/>
<dbReference type="PaxDb" id="39947-P07728"/>
<dbReference type="EnsemblPlants" id="Os01t0762500-01">
    <property type="protein sequence ID" value="Os01t0762500-01"/>
    <property type="gene ID" value="Os01g0762500"/>
</dbReference>
<dbReference type="Gramene" id="Os01t0762500-01">
    <property type="protein sequence ID" value="Os01t0762500-01"/>
    <property type="gene ID" value="Os01g0762500"/>
</dbReference>
<dbReference type="eggNOG" id="ENOG502QU1J">
    <property type="taxonomic scope" value="Eukaryota"/>
</dbReference>
<dbReference type="HOGENOM" id="CLU_026341_2_0_1"/>
<dbReference type="InParanoid" id="P07728"/>
<dbReference type="OMA" id="AHWIYNT"/>
<dbReference type="OrthoDB" id="2016041at2759"/>
<dbReference type="Proteomes" id="UP000000763">
    <property type="component" value="Chromosome 1"/>
</dbReference>
<dbReference type="Proteomes" id="UP000059680">
    <property type="component" value="Chromosome 1"/>
</dbReference>
<dbReference type="ExpressionAtlas" id="P07728">
    <property type="expression patterns" value="baseline and differential"/>
</dbReference>
<dbReference type="GO" id="GO:0045735">
    <property type="term" value="F:nutrient reservoir activity"/>
    <property type="evidence" value="ECO:0007669"/>
    <property type="project" value="UniProtKB-KW"/>
</dbReference>
<dbReference type="GO" id="GO:0048316">
    <property type="term" value="P:seed development"/>
    <property type="evidence" value="ECO:0007669"/>
    <property type="project" value="UniProtKB-ARBA"/>
</dbReference>
<dbReference type="CDD" id="cd02243">
    <property type="entry name" value="cupin_11S_legumin_C"/>
    <property type="match status" value="1"/>
</dbReference>
<dbReference type="CDD" id="cd02242">
    <property type="entry name" value="cupin_11S_legumin_N"/>
    <property type="match status" value="1"/>
</dbReference>
<dbReference type="FunFam" id="2.60.120.10:FF:000073">
    <property type="entry name" value="Glycinin G1"/>
    <property type="match status" value="1"/>
</dbReference>
<dbReference type="Gene3D" id="2.60.120.10">
    <property type="entry name" value="Jelly Rolls"/>
    <property type="match status" value="2"/>
</dbReference>
<dbReference type="InterPro" id="IPR022379">
    <property type="entry name" value="11S_seedstore_CS"/>
</dbReference>
<dbReference type="InterPro" id="IPR006044">
    <property type="entry name" value="11S_seedstore_pln"/>
</dbReference>
<dbReference type="InterPro" id="IPR006045">
    <property type="entry name" value="Cupin_1"/>
</dbReference>
<dbReference type="InterPro" id="IPR014710">
    <property type="entry name" value="RmlC-like_jellyroll"/>
</dbReference>
<dbReference type="InterPro" id="IPR011051">
    <property type="entry name" value="RmlC_Cupin_sf"/>
</dbReference>
<dbReference type="InterPro" id="IPR050253">
    <property type="entry name" value="Seed_Storage-Functional"/>
</dbReference>
<dbReference type="PANTHER" id="PTHR31189:SF35">
    <property type="entry name" value="12S SEED STORAGE PROTEIN CRB"/>
    <property type="match status" value="1"/>
</dbReference>
<dbReference type="PANTHER" id="PTHR31189">
    <property type="entry name" value="OS03G0336100 PROTEIN-RELATED"/>
    <property type="match status" value="1"/>
</dbReference>
<dbReference type="Pfam" id="PF00190">
    <property type="entry name" value="Cupin_1"/>
    <property type="match status" value="2"/>
</dbReference>
<dbReference type="PRINTS" id="PR00439">
    <property type="entry name" value="11SGLOBULIN"/>
</dbReference>
<dbReference type="SMART" id="SM00835">
    <property type="entry name" value="Cupin_1"/>
    <property type="match status" value="2"/>
</dbReference>
<dbReference type="SUPFAM" id="SSF51182">
    <property type="entry name" value="RmlC-like cupins"/>
    <property type="match status" value="1"/>
</dbReference>
<dbReference type="PROSITE" id="PS00305">
    <property type="entry name" value="11S_SEED_STORAGE"/>
    <property type="match status" value="1"/>
</dbReference>